<organism>
    <name type="scientific">Homo sapiens</name>
    <name type="common">Human</name>
    <dbReference type="NCBI Taxonomy" id="9606"/>
    <lineage>
        <taxon>Eukaryota</taxon>
        <taxon>Metazoa</taxon>
        <taxon>Chordata</taxon>
        <taxon>Craniata</taxon>
        <taxon>Vertebrata</taxon>
        <taxon>Euteleostomi</taxon>
        <taxon>Mammalia</taxon>
        <taxon>Eutheria</taxon>
        <taxon>Euarchontoglires</taxon>
        <taxon>Primates</taxon>
        <taxon>Haplorrhini</taxon>
        <taxon>Catarrhini</taxon>
        <taxon>Hominidae</taxon>
        <taxon>Homo</taxon>
    </lineage>
</organism>
<protein>
    <recommendedName>
        <fullName>Growth hormone secretagogue receptor type 1</fullName>
        <shortName>GHS-R</shortName>
    </recommendedName>
    <alternativeName>
        <fullName>GH-releasing peptide receptor</fullName>
        <shortName>GHRP</shortName>
    </alternativeName>
    <alternativeName>
        <fullName>Ghrelin receptor</fullName>
    </alternativeName>
</protein>
<evidence type="ECO:0000255" key="1"/>
<evidence type="ECO:0000255" key="2">
    <source>
        <dbReference type="PROSITE-ProRule" id="PRU00521"/>
    </source>
</evidence>
<evidence type="ECO:0000269" key="3">
    <source>
    </source>
</evidence>
<evidence type="ECO:0000269" key="4">
    <source>
    </source>
</evidence>
<evidence type="ECO:0000269" key="5">
    <source>
    </source>
</evidence>
<evidence type="ECO:0000269" key="6">
    <source>
    </source>
</evidence>
<evidence type="ECO:0000303" key="7">
    <source>
    </source>
</evidence>
<evidence type="ECO:0000303" key="8">
    <source>
    </source>
</evidence>
<evidence type="ECO:0000303" key="9">
    <source ref="3"/>
</evidence>
<evidence type="ECO:0007829" key="10">
    <source>
        <dbReference type="PDB" id="6KO5"/>
    </source>
</evidence>
<evidence type="ECO:0007829" key="11">
    <source>
        <dbReference type="PDB" id="7NA7"/>
    </source>
</evidence>
<evidence type="ECO:0007829" key="12">
    <source>
        <dbReference type="PDB" id="7NA8"/>
    </source>
</evidence>
<accession>Q92847</accession>
<accession>Q14D12</accession>
<accession>Q6ISR8</accession>
<accession>Q92848</accession>
<accession>Q96RJ7</accession>
<comment type="function">
    <text evidence="3 4">Receptor for ghrelin, coupled to G-alpha-11 proteins. Stimulates growth hormone secretion. Also binds other growth hormone releasing peptides (GHRP) (e.g. Met-enkephalin and GHRP-6) as well as non-peptide, low molecular weight secretagogues (e.g. L-692,429, MK-0677, adenosine).</text>
</comment>
<comment type="interaction">
    <interactant intactId="EBI-21459171">
        <id>Q92847-1</id>
    </interactant>
    <interactant intactId="EBI-21459171">
        <id>Q92847-1</id>
        <label>GHSR</label>
    </interactant>
    <organismsDiffer>false</organismsDiffer>
    <experiments>12</experiments>
</comment>
<comment type="interaction">
    <interactant intactId="EBI-21459171">
        <id>Q92847-1</id>
    </interactant>
    <interactant intactId="EBI-21459245">
        <id>Q92847-2</id>
        <label>GHSR</label>
    </interactant>
    <organismsDiffer>false</organismsDiffer>
    <experiments>10</experiments>
</comment>
<comment type="interaction">
    <interactant intactId="EBI-21459171">
        <id>Q92847-1</id>
    </interactant>
    <interactant intactId="EBI-3248663">
        <id>Q99720</id>
        <label>SIGMAR1</label>
    </interactant>
    <organismsDiffer>false</organismsDiffer>
    <experiments>8</experiments>
</comment>
<comment type="subcellular location">
    <subcellularLocation>
        <location>Cell membrane</location>
        <topology>Multi-pass membrane protein</topology>
    </subcellularLocation>
</comment>
<comment type="alternative products">
    <event type="alternative splicing"/>
    <isoform>
        <id>Q92847-1</id>
        <name>1A</name>
        <sequence type="displayed"/>
    </isoform>
    <isoform>
        <id>Q92847-2</id>
        <name>1B</name>
        <sequence type="described" ref="VSP_001916 VSP_001917"/>
    </isoform>
</comment>
<comment type="tissue specificity">
    <text>Pituitary and hypothalamus.</text>
</comment>
<comment type="disease" evidence="5 6">
    <disease id="DI-04331">
        <name>Growth hormone deficiency, isolated partial</name>
        <acronym>GHDP</acronym>
        <description>A disorder characterized by partial growth hormone deficiency resulting in growth delay and short stature, sometimes associated with recurrent episodes of abdominal pain, vomiting, ketosis and hypoglycemia.</description>
        <dbReference type="MIM" id="615925"/>
    </disease>
    <text>The disease is caused by variants affecting the gene represented in this entry.</text>
</comment>
<comment type="similarity">
    <text evidence="2">Belongs to the G-protein coupled receptor 1 family.</text>
</comment>
<feature type="chain" id="PRO_0000069479" description="Growth hormone secretagogue receptor type 1">
    <location>
        <begin position="1"/>
        <end position="366"/>
    </location>
</feature>
<feature type="topological domain" description="Extracellular" evidence="1">
    <location>
        <begin position="1"/>
        <end position="40"/>
    </location>
</feature>
<feature type="transmembrane region" description="Helical; Name=1" evidence="1">
    <location>
        <begin position="41"/>
        <end position="66"/>
    </location>
</feature>
<feature type="topological domain" description="Cytoplasmic" evidence="1">
    <location>
        <begin position="67"/>
        <end position="72"/>
    </location>
</feature>
<feature type="transmembrane region" description="Helical; Name=2" evidence="1">
    <location>
        <begin position="73"/>
        <end position="96"/>
    </location>
</feature>
<feature type="topological domain" description="Extracellular" evidence="1">
    <location>
        <begin position="97"/>
        <end position="117"/>
    </location>
</feature>
<feature type="transmembrane region" description="Helical; Name=3" evidence="1">
    <location>
        <begin position="118"/>
        <end position="139"/>
    </location>
</feature>
<feature type="topological domain" description="Cytoplasmic" evidence="1">
    <location>
        <begin position="140"/>
        <end position="162"/>
    </location>
</feature>
<feature type="transmembrane region" description="Helical; Name=4" evidence="1">
    <location>
        <begin position="163"/>
        <end position="183"/>
    </location>
</feature>
<feature type="topological domain" description="Extracellular" evidence="1">
    <location>
        <begin position="184"/>
        <end position="211"/>
    </location>
</feature>
<feature type="transmembrane region" description="Helical; Name=5" evidence="1">
    <location>
        <begin position="212"/>
        <end position="235"/>
    </location>
</feature>
<feature type="topological domain" description="Cytoplasmic" evidence="1">
    <location>
        <begin position="236"/>
        <end position="263"/>
    </location>
</feature>
<feature type="transmembrane region" description="Helical; Name=6" evidence="1">
    <location>
        <begin position="264"/>
        <end position="285"/>
    </location>
</feature>
<feature type="topological domain" description="Extracellular" evidence="1">
    <location>
        <begin position="286"/>
        <end position="302"/>
    </location>
</feature>
<feature type="transmembrane region" description="Helical; Name=7" evidence="1">
    <location>
        <begin position="303"/>
        <end position="326"/>
    </location>
</feature>
<feature type="topological domain" description="Cytoplasmic" evidence="1">
    <location>
        <begin position="327"/>
        <end position="366"/>
    </location>
</feature>
<feature type="glycosylation site" description="N-linked (GlcNAc...) asparagine" evidence="1">
    <location>
        <position position="13"/>
    </location>
</feature>
<feature type="glycosylation site" description="N-linked (GlcNAc...) asparagine" evidence="1">
    <location>
        <position position="27"/>
    </location>
</feature>
<feature type="disulfide bond" evidence="2">
    <location>
        <begin position="116"/>
        <end position="198"/>
    </location>
</feature>
<feature type="splice variant" id="VSP_001916" description="In isoform 1B." evidence="7 8 9">
    <original>AVVVFAFILCWLPFHVGRYLFSKS</original>
    <variation>GGSQRALRLSLAGPILSLCLLPSL</variation>
    <location>
        <begin position="266"/>
        <end position="289"/>
    </location>
</feature>
<feature type="splice variant" id="VSP_001917" description="In isoform 1B." evidence="7 8 9">
    <location>
        <begin position="290"/>
        <end position="366"/>
    </location>
</feature>
<feature type="sequence variant" id="VAR_049389" description="In dbSNP:rs2232165.">
    <original>T</original>
    <variation>I</variation>
    <location>
        <position position="5"/>
    </location>
</feature>
<feature type="sequence variant" id="VAR_032705" description="In GHDP; affects cell-surface expression; impairs constitutive activity; does not affect the ability to respond to ghrelin; dbSNP:rs121917883." evidence="5">
    <original>A</original>
    <variation>E</variation>
    <location>
        <position position="204"/>
    </location>
</feature>
<feature type="sequence variant" id="VAR_073173" description="In GHDP; results in partial loss of constitutive activity of the receptor; does not affect response to ghrelin; does not affect receptor cell-surface expression; dbSNP:rs199588904." evidence="6">
    <original>R</original>
    <variation>W</variation>
    <location>
        <position position="237"/>
    </location>
</feature>
<feature type="helix" evidence="11">
    <location>
        <begin position="40"/>
        <end position="70"/>
    </location>
</feature>
<feature type="helix" evidence="11">
    <location>
        <begin position="72"/>
        <end position="74"/>
    </location>
</feature>
<feature type="helix" evidence="11">
    <location>
        <begin position="77"/>
        <end position="94"/>
    </location>
</feature>
<feature type="helix" evidence="11">
    <location>
        <begin position="96"/>
        <end position="104"/>
    </location>
</feature>
<feature type="helix" evidence="11">
    <location>
        <begin position="113"/>
        <end position="146"/>
    </location>
</feature>
<feature type="helix" evidence="11">
    <location>
        <begin position="148"/>
        <end position="154"/>
    </location>
</feature>
<feature type="helix" evidence="11">
    <location>
        <begin position="158"/>
        <end position="175"/>
    </location>
</feature>
<feature type="helix" evidence="11">
    <location>
        <begin position="178"/>
        <end position="181"/>
    </location>
</feature>
<feature type="strand" evidence="12">
    <location>
        <begin position="182"/>
        <end position="184"/>
    </location>
</feature>
<feature type="helix" evidence="11">
    <location>
        <begin position="192"/>
        <end position="195"/>
    </location>
</feature>
<feature type="strand" evidence="12">
    <location>
        <begin position="198"/>
        <end position="200"/>
    </location>
</feature>
<feature type="helix" evidence="11">
    <location>
        <begin position="203"/>
        <end position="206"/>
    </location>
</feature>
<feature type="helix" evidence="11">
    <location>
        <begin position="209"/>
        <end position="242"/>
    </location>
</feature>
<feature type="turn" evidence="10">
    <location>
        <begin position="252"/>
        <end position="254"/>
    </location>
</feature>
<feature type="helix" evidence="11">
    <location>
        <begin position="256"/>
        <end position="289"/>
    </location>
</feature>
<feature type="helix" evidence="11">
    <location>
        <begin position="296"/>
        <end position="324"/>
    </location>
</feature>
<feature type="helix" evidence="11">
    <location>
        <begin position="328"/>
        <end position="337"/>
    </location>
</feature>
<name>GHSR_HUMAN</name>
<reference key="1">
    <citation type="journal article" date="1996" name="Science">
        <title>A receptor in pituitary and hypothalamus that functions in growth hormone release.</title>
        <authorList>
            <person name="Howard A.D."/>
            <person name="Feighner S.D."/>
            <person name="Cully D.F."/>
            <person name="Arena J.P."/>
            <person name="Liberator P.A."/>
            <person name="Rosenblum C.I."/>
            <person name="Hamelin M."/>
            <person name="Hreniuk D.L."/>
            <person name="Palyha O.C."/>
            <person name="Anderson J."/>
            <person name="Paress P.S."/>
            <person name="Diaz C."/>
            <person name="Chou M."/>
            <person name="Liu K.K."/>
            <person name="McKee K.K."/>
            <person name="Pong S.-S."/>
            <person name="Chaung L.-Y."/>
            <person name="Elbrecht A."/>
            <person name="Dashkevicz M."/>
            <person name="Heavens R."/>
            <person name="Rigby M."/>
            <person name="Sirinathsinghji D.J.S."/>
            <person name="Dean D.C."/>
            <person name="Melillo D.G."/>
            <person name="Patchett A.A."/>
            <person name="Nargund R."/>
            <person name="Griffin P.R."/>
            <person name="Demartino J.A."/>
            <person name="Gupta S.K."/>
            <person name="Schaeffer J.M."/>
            <person name="Smith R.G."/>
            <person name="van der Ploeg L.H.T."/>
        </authorList>
    </citation>
    <scope>NUCLEOTIDE SEQUENCE [MRNA] (ISOFORMS 1A AND 1B)</scope>
    <source>
        <tissue>Pituitary</tissue>
    </source>
</reference>
<reference key="2">
    <citation type="journal article" date="2001" name="Endocrinology">
        <title>Genomic structure and transcriptional regulation of the human growth hormone secretagogue receptor.</title>
        <authorList>
            <person name="Petersenn S."/>
            <person name="Rasch A.C."/>
            <person name="Penshorn M."/>
            <person name="Beil F.U."/>
            <person name="Schulte H.M."/>
        </authorList>
    </citation>
    <scope>NUCLEOTIDE SEQUENCE [GENOMIC DNA] (ISOFORMS 1A AND 1B)</scope>
</reference>
<reference key="3">
    <citation type="submission" date="2003-06" db="EMBL/GenBank/DDBJ databases">
        <title>cDNA clones of human proteins involved in signal transduction sequenced by the Guthrie cDNA resource center (www.cdna.org).</title>
        <authorList>
            <person name="Kopatz S.A."/>
            <person name="Aronstam R.S."/>
            <person name="Sharma S.V."/>
        </authorList>
    </citation>
    <scope>NUCLEOTIDE SEQUENCE [LARGE SCALE MRNA] (ISOFORMS 1A AND 1B)</scope>
</reference>
<reference key="4">
    <citation type="submission" date="2005-09" db="EMBL/GenBank/DDBJ databases">
        <authorList>
            <person name="Mural R.J."/>
            <person name="Istrail S."/>
            <person name="Sutton G.G."/>
            <person name="Florea L."/>
            <person name="Halpern A.L."/>
            <person name="Mobarry C.M."/>
            <person name="Lippert R."/>
            <person name="Walenz B."/>
            <person name="Shatkay H."/>
            <person name="Dew I."/>
            <person name="Miller J.R."/>
            <person name="Flanigan M.J."/>
            <person name="Edwards N.J."/>
            <person name="Bolanos R."/>
            <person name="Fasulo D."/>
            <person name="Halldorsson B.V."/>
            <person name="Hannenhalli S."/>
            <person name="Turner R."/>
            <person name="Yooseph S."/>
            <person name="Lu F."/>
            <person name="Nusskern D.R."/>
            <person name="Shue B.C."/>
            <person name="Zheng X.H."/>
            <person name="Zhong F."/>
            <person name="Delcher A.L."/>
            <person name="Huson D.H."/>
            <person name="Kravitz S.A."/>
            <person name="Mouchard L."/>
            <person name="Reinert K."/>
            <person name="Remington K.A."/>
            <person name="Clark A.G."/>
            <person name="Waterman M.S."/>
            <person name="Eichler E.E."/>
            <person name="Adams M.D."/>
            <person name="Hunkapiller M.W."/>
            <person name="Myers E.W."/>
            <person name="Venter J.C."/>
        </authorList>
    </citation>
    <scope>NUCLEOTIDE SEQUENCE [LARGE SCALE GENOMIC DNA]</scope>
</reference>
<reference key="5">
    <citation type="journal article" date="2004" name="Genome Res.">
        <title>The status, quality, and expansion of the NIH full-length cDNA project: the Mammalian Gene Collection (MGC).</title>
        <authorList>
            <consortium name="The MGC Project Team"/>
        </authorList>
    </citation>
    <scope>NUCLEOTIDE SEQUENCE [LARGE SCALE MRNA] (ISOFORMS 1A AND 1B)</scope>
</reference>
<reference key="6">
    <citation type="journal article" date="2001" name="Endocrine">
        <title>Growth hormone secretagogue receptor family members and ligands.</title>
        <authorList>
            <person name="Smith R.G."/>
            <person name="Leonard R."/>
            <person name="Bailey A.R.T."/>
            <person name="Palyha O.C."/>
            <person name="Feighner S.D."/>
            <person name="Tan C.P."/>
            <person name="Mckee K.K."/>
            <person name="Pong S.-S."/>
            <person name="Griffin P.R."/>
            <person name="Howard A.D."/>
        </authorList>
    </citation>
    <scope>FUNCTION</scope>
</reference>
<reference key="7">
    <citation type="journal article" date="1999" name="Nature">
        <title>Ghrelin is a growth-hormone-releasing acylated peptide from stomach.</title>
        <authorList>
            <person name="Kojima M."/>
            <person name="Hosoda H."/>
            <person name="Date Y."/>
            <person name="Nakazato M."/>
            <person name="Matsuo H."/>
            <person name="Kangawa K."/>
        </authorList>
    </citation>
    <scope>FUNCTION</scope>
</reference>
<reference key="8">
    <citation type="journal article" date="2006" name="J. Clin. Invest.">
        <title>Loss of constitutive activity of the growth hormone secretagogue receptor in familial short stature.</title>
        <authorList>
            <person name="Pantel J."/>
            <person name="Legendre M."/>
            <person name="Cabrol S."/>
            <person name="Hilal L."/>
            <person name="Hajaji Y."/>
            <person name="Morisset S."/>
            <person name="Nivot S."/>
            <person name="Vie-Luton M.-P."/>
            <person name="Grouselle D."/>
            <person name="de Kerdanet M."/>
            <person name="Kadiri A."/>
            <person name="Epelbaum J."/>
            <person name="Le Bouc Y."/>
            <person name="Amselem S."/>
        </authorList>
    </citation>
    <scope>INVOLVEMENT IN GHDP</scope>
    <scope>VARIANT GHDP GLU-204</scope>
    <scope>CHARACTERIZATION OF VARIANT GHDP GLU-204</scope>
</reference>
<reference key="9">
    <citation type="journal article" date="2009" name="J. Clin. Endocrinol. Metab.">
        <title>Recessive isolated growth hormone deficiency and mutations in the ghrelin receptor.</title>
        <authorList>
            <person name="Pantel J."/>
            <person name="Legendre M."/>
            <person name="Nivot S."/>
            <person name="Morisset S."/>
            <person name="Vie-Luton M.P."/>
            <person name="le Bouc Y."/>
            <person name="Epelbaum J."/>
            <person name="Amselem S."/>
        </authorList>
    </citation>
    <scope>INVOLVEMENT IN GHDP</scope>
    <scope>VARIANT GHDP TRP-237</scope>
    <scope>CHARACTERIZATION OF VARIANT GHDP TRP-237</scope>
</reference>
<sequence length="366" mass="41329">MWNATPSEEPGFNLTLADLDWDASPGNDSLGDELLQLFPAPLLAGVTATCVALFVVGIAGNLLTMLVVSRFRELRTTTNLYLSSMAFSDLLIFLCMPLDLVRLWQYRPWNFGDLLCKLFQFVSESCTYATVLTITALSVERYFAICFPLRAKVVVTKGRVKLVIFVIWAVAFCSAGPIFVLVGVEHENGTDPWDTNECRPTEFAVRSGLLTVMVWVSSIFFFLPVFCLTVLYSLIGRKLWRRRRGDAVVGASLRDQNHKQTVKMLAVVVFAFILCWLPFHVGRYLFSKSFEPGSLEIAQISQYCNLVSFVLFYLSAAINPILYNIMSKKYRVAVFRLLGFEPFSQRKLSTLKDESSRAWTESSINT</sequence>
<proteinExistence type="evidence at protein level"/>
<keyword id="KW-0002">3D-structure</keyword>
<keyword id="KW-0025">Alternative splicing</keyword>
<keyword id="KW-1003">Cell membrane</keyword>
<keyword id="KW-0225">Disease variant</keyword>
<keyword id="KW-1015">Disulfide bond</keyword>
<keyword id="KW-0242">Dwarfism</keyword>
<keyword id="KW-0297">G-protein coupled receptor</keyword>
<keyword id="KW-0325">Glycoprotein</keyword>
<keyword id="KW-0472">Membrane</keyword>
<keyword id="KW-0675">Receptor</keyword>
<keyword id="KW-1185">Reference proteome</keyword>
<keyword id="KW-0807">Transducer</keyword>
<keyword id="KW-0812">Transmembrane</keyword>
<keyword id="KW-1133">Transmembrane helix</keyword>
<gene>
    <name type="primary">GHSR</name>
</gene>
<dbReference type="EMBL" id="U60179">
    <property type="protein sequence ID" value="AAC50653.1"/>
    <property type="molecule type" value="mRNA"/>
</dbReference>
<dbReference type="EMBL" id="U60181">
    <property type="protein sequence ID" value="AAC50654.1"/>
    <property type="molecule type" value="mRNA"/>
</dbReference>
<dbReference type="EMBL" id="AF369786">
    <property type="protein sequence ID" value="AAK71539.1"/>
    <property type="molecule type" value="Genomic_DNA"/>
</dbReference>
<dbReference type="EMBL" id="AF369786">
    <property type="protein sequence ID" value="AAK71540.1"/>
    <property type="molecule type" value="Genomic_DNA"/>
</dbReference>
<dbReference type="EMBL" id="AY429112">
    <property type="protein sequence ID" value="AAR07907.1"/>
    <property type="molecule type" value="mRNA"/>
</dbReference>
<dbReference type="EMBL" id="AY322544">
    <property type="protein sequence ID" value="AAP84357.1"/>
    <property type="molecule type" value="Genomic_DNA"/>
</dbReference>
<dbReference type="EMBL" id="CH471052">
    <property type="protein sequence ID" value="EAW78468.1"/>
    <property type="molecule type" value="Genomic_DNA"/>
</dbReference>
<dbReference type="EMBL" id="BC069068">
    <property type="protein sequence ID" value="AAH69068.1"/>
    <property type="molecule type" value="mRNA"/>
</dbReference>
<dbReference type="EMBL" id="BC069374">
    <property type="protein sequence ID" value="AAH69374.1"/>
    <property type="molecule type" value="mRNA"/>
</dbReference>
<dbReference type="EMBL" id="BC113547">
    <property type="protein sequence ID" value="AAI13548.1"/>
    <property type="molecule type" value="mRNA"/>
</dbReference>
<dbReference type="CCDS" id="CCDS3218.1">
    <molecule id="Q92847-1"/>
</dbReference>
<dbReference type="CCDS" id="CCDS46959.1">
    <molecule id="Q92847-2"/>
</dbReference>
<dbReference type="RefSeq" id="NP_004113.1">
    <molecule id="Q92847-2"/>
    <property type="nucleotide sequence ID" value="NM_004122.2"/>
</dbReference>
<dbReference type="RefSeq" id="NP_940799.1">
    <molecule id="Q92847-1"/>
    <property type="nucleotide sequence ID" value="NM_198407.2"/>
</dbReference>
<dbReference type="PDB" id="6KO5">
    <property type="method" value="X-ray"/>
    <property type="resolution" value="3.30 A"/>
    <property type="chains" value="A=29-346"/>
</dbReference>
<dbReference type="PDB" id="7F9Y">
    <property type="method" value="EM"/>
    <property type="resolution" value="2.90 A"/>
    <property type="chains" value="R=1-366"/>
</dbReference>
<dbReference type="PDB" id="7F9Z">
    <property type="method" value="EM"/>
    <property type="resolution" value="3.20 A"/>
    <property type="chains" value="R=1-366"/>
</dbReference>
<dbReference type="PDB" id="7NA7">
    <property type="method" value="EM"/>
    <property type="resolution" value="2.70 A"/>
    <property type="chains" value="R=1-366"/>
</dbReference>
<dbReference type="PDB" id="7NA8">
    <property type="method" value="EM"/>
    <property type="resolution" value="2.70 A"/>
    <property type="chains" value="R=1-366"/>
</dbReference>
<dbReference type="PDB" id="7W2Z">
    <property type="method" value="EM"/>
    <property type="resolution" value="2.80 A"/>
    <property type="chains" value="R=1-366"/>
</dbReference>
<dbReference type="PDB" id="8JSR">
    <property type="method" value="EM"/>
    <property type="resolution" value="2.90 A"/>
    <property type="chains" value="R=2-366"/>
</dbReference>
<dbReference type="PDBsum" id="6KO5"/>
<dbReference type="PDBsum" id="7F9Y"/>
<dbReference type="PDBsum" id="7F9Z"/>
<dbReference type="PDBsum" id="7NA7"/>
<dbReference type="PDBsum" id="7NA8"/>
<dbReference type="PDBsum" id="7W2Z"/>
<dbReference type="PDBsum" id="8JSR"/>
<dbReference type="EMDB" id="EMD-24267"/>
<dbReference type="EMDB" id="EMD-24268"/>
<dbReference type="EMDB" id="EMD-31501"/>
<dbReference type="EMDB" id="EMD-32268"/>
<dbReference type="EMDB" id="EMD-36627"/>
<dbReference type="SMR" id="Q92847"/>
<dbReference type="BioGRID" id="108960">
    <property type="interactions" value="9"/>
</dbReference>
<dbReference type="CORUM" id="Q92847"/>
<dbReference type="FunCoup" id="Q92847">
    <property type="interactions" value="763"/>
</dbReference>
<dbReference type="IntAct" id="Q92847">
    <property type="interactions" value="7"/>
</dbReference>
<dbReference type="STRING" id="9606.ENSP00000241256"/>
<dbReference type="BindingDB" id="Q92847"/>
<dbReference type="ChEMBL" id="CHEMBL4616"/>
<dbReference type="DrugBank" id="DB06645">
    <property type="generic name" value="Anamorelin"/>
</dbReference>
<dbReference type="DrugBank" id="DB15205">
    <property type="generic name" value="Capromorelin"/>
</dbReference>
<dbReference type="DrugBank" id="DB15488">
    <property type="generic name" value="Echinacoside"/>
</dbReference>
<dbReference type="DrugBank" id="DB18214">
    <property type="generic name" value="Ibutamoren"/>
</dbReference>
<dbReference type="DrugBank" id="DB12370">
    <property type="generic name" value="Ipamorelin"/>
</dbReference>
<dbReference type="DrugBank" id="DB13074">
    <property type="generic name" value="Macimorelin"/>
</dbReference>
<dbReference type="DrugBank" id="DB14870">
    <property type="generic name" value="PF-5190457"/>
</dbReference>
<dbReference type="DrugBank" id="DB18252">
    <property type="generic name" value="Pralmorelin"/>
</dbReference>
<dbReference type="DrugBank" id="DB12128">
    <property type="generic name" value="Ulimorelin"/>
</dbReference>
<dbReference type="DrugCentral" id="Q92847"/>
<dbReference type="GuidetoPHARMACOLOGY" id="246"/>
<dbReference type="TCDB" id="9.A.14.1.6">
    <property type="family name" value="the g-protein-coupled receptor (gpcr) family"/>
</dbReference>
<dbReference type="GlyCosmos" id="Q92847">
    <property type="glycosylation" value="2 sites, No reported glycans"/>
</dbReference>
<dbReference type="GlyGen" id="Q92847">
    <property type="glycosylation" value="2 sites"/>
</dbReference>
<dbReference type="iPTMnet" id="Q92847"/>
<dbReference type="PhosphoSitePlus" id="Q92847"/>
<dbReference type="BioMuta" id="GHSR"/>
<dbReference type="DMDM" id="2494998"/>
<dbReference type="PaxDb" id="9606-ENSP00000241256"/>
<dbReference type="ProteomicsDB" id="75541">
    <molecule id="Q92847-1"/>
</dbReference>
<dbReference type="ProteomicsDB" id="75542">
    <molecule id="Q92847-2"/>
</dbReference>
<dbReference type="Antibodypedia" id="3248">
    <property type="antibodies" value="283 antibodies from 32 providers"/>
</dbReference>
<dbReference type="DNASU" id="2693"/>
<dbReference type="Ensembl" id="ENST00000241256.3">
    <molecule id="Q92847-1"/>
    <property type="protein sequence ID" value="ENSP00000241256.2"/>
    <property type="gene ID" value="ENSG00000121853.4"/>
</dbReference>
<dbReference type="Ensembl" id="ENST00000427970.1">
    <molecule id="Q92847-2"/>
    <property type="protein sequence ID" value="ENSP00000395344.1"/>
    <property type="gene ID" value="ENSG00000121853.4"/>
</dbReference>
<dbReference type="GeneID" id="2693"/>
<dbReference type="KEGG" id="hsa:2693"/>
<dbReference type="MANE-Select" id="ENST00000241256.3">
    <property type="protein sequence ID" value="ENSP00000241256.2"/>
    <property type="RefSeq nucleotide sequence ID" value="NM_198407.2"/>
    <property type="RefSeq protein sequence ID" value="NP_940799.1"/>
</dbReference>
<dbReference type="UCSC" id="uc003fib.3">
    <molecule id="Q92847-1"/>
    <property type="organism name" value="human"/>
</dbReference>
<dbReference type="AGR" id="HGNC:4267"/>
<dbReference type="CTD" id="2693"/>
<dbReference type="DisGeNET" id="2693"/>
<dbReference type="GeneCards" id="GHSR"/>
<dbReference type="HGNC" id="HGNC:4267">
    <property type="gene designation" value="GHSR"/>
</dbReference>
<dbReference type="HPA" id="ENSG00000121853">
    <property type="expression patterns" value="Tissue enriched (pituitary)"/>
</dbReference>
<dbReference type="MalaCards" id="GHSR"/>
<dbReference type="MIM" id="601898">
    <property type="type" value="gene"/>
</dbReference>
<dbReference type="MIM" id="615925">
    <property type="type" value="phenotype"/>
</dbReference>
<dbReference type="neXtProt" id="NX_Q92847"/>
<dbReference type="OpenTargets" id="ENSG00000121853"/>
<dbReference type="Orphanet" id="314811">
    <property type="disease" value="Short stature due to GHSR deficiency"/>
</dbReference>
<dbReference type="PharmGKB" id="PA28677"/>
<dbReference type="VEuPathDB" id="HostDB:ENSG00000121853"/>
<dbReference type="eggNOG" id="KOG3656">
    <property type="taxonomic scope" value="Eukaryota"/>
</dbReference>
<dbReference type="GeneTree" id="ENSGT01130000278335"/>
<dbReference type="HOGENOM" id="CLU_009579_6_5_1"/>
<dbReference type="InParanoid" id="Q92847"/>
<dbReference type="OMA" id="IGNLMTM"/>
<dbReference type="OrthoDB" id="10011262at2759"/>
<dbReference type="PAN-GO" id="Q92847">
    <property type="GO annotations" value="4 GO annotations based on evolutionary models"/>
</dbReference>
<dbReference type="PhylomeDB" id="Q92847"/>
<dbReference type="TreeFam" id="TF332184"/>
<dbReference type="PathwayCommons" id="Q92847"/>
<dbReference type="Reactome" id="R-HSA-375276">
    <property type="pathway name" value="Peptide ligand-binding receptors"/>
</dbReference>
<dbReference type="Reactome" id="R-HSA-416476">
    <property type="pathway name" value="G alpha (q) signalling events"/>
</dbReference>
<dbReference type="SignaLink" id="Q92847"/>
<dbReference type="SIGNOR" id="Q92847"/>
<dbReference type="BioGRID-ORCS" id="2693">
    <property type="hits" value="23 hits in 1140 CRISPR screens"/>
</dbReference>
<dbReference type="GeneWiki" id="Growth_hormone_secretagogue_receptor"/>
<dbReference type="GenomeRNAi" id="2693"/>
<dbReference type="Pharos" id="Q92847">
    <property type="development level" value="Tclin"/>
</dbReference>
<dbReference type="PRO" id="PR:Q92847"/>
<dbReference type="Proteomes" id="UP000005640">
    <property type="component" value="Chromosome 3"/>
</dbReference>
<dbReference type="RNAct" id="Q92847">
    <property type="molecule type" value="protein"/>
</dbReference>
<dbReference type="Bgee" id="ENSG00000121853">
    <property type="expression patterns" value="Expressed in pituitary gland and 20 other cell types or tissues"/>
</dbReference>
<dbReference type="GO" id="GO:0009986">
    <property type="term" value="C:cell surface"/>
    <property type="evidence" value="ECO:0000314"/>
    <property type="project" value="HGNC-UCL"/>
</dbReference>
<dbReference type="GO" id="GO:0098978">
    <property type="term" value="C:glutamatergic synapse"/>
    <property type="evidence" value="ECO:0007669"/>
    <property type="project" value="Ensembl"/>
</dbReference>
<dbReference type="GO" id="GO:0045121">
    <property type="term" value="C:membrane raft"/>
    <property type="evidence" value="ECO:0000314"/>
    <property type="project" value="UniProtKB"/>
</dbReference>
<dbReference type="GO" id="GO:0043005">
    <property type="term" value="C:neuron projection"/>
    <property type="evidence" value="ECO:0000314"/>
    <property type="project" value="UniProtKB"/>
</dbReference>
<dbReference type="GO" id="GO:0005886">
    <property type="term" value="C:plasma membrane"/>
    <property type="evidence" value="ECO:0000318"/>
    <property type="project" value="GO_Central"/>
</dbReference>
<dbReference type="GO" id="GO:0098794">
    <property type="term" value="C:postsynapse"/>
    <property type="evidence" value="ECO:0007669"/>
    <property type="project" value="GOC"/>
</dbReference>
<dbReference type="GO" id="GO:0098685">
    <property type="term" value="C:Schaffer collateral - CA1 synapse"/>
    <property type="evidence" value="ECO:0007669"/>
    <property type="project" value="Ensembl"/>
</dbReference>
<dbReference type="GO" id="GO:0097060">
    <property type="term" value="C:synaptic membrane"/>
    <property type="evidence" value="ECO:0007669"/>
    <property type="project" value="Ensembl"/>
</dbReference>
<dbReference type="GO" id="GO:0004930">
    <property type="term" value="F:G protein-coupled receptor activity"/>
    <property type="evidence" value="ECO:0000314"/>
    <property type="project" value="HGNC-UCL"/>
</dbReference>
<dbReference type="GO" id="GO:0001616">
    <property type="term" value="F:growth hormone secretagogue receptor activity"/>
    <property type="evidence" value="ECO:0000314"/>
    <property type="project" value="HGNC-UCL"/>
</dbReference>
<dbReference type="GO" id="GO:0016520">
    <property type="term" value="F:growth hormone-releasing hormone receptor activity"/>
    <property type="evidence" value="ECO:0000314"/>
    <property type="project" value="HGNC-UCL"/>
</dbReference>
<dbReference type="GO" id="GO:0042802">
    <property type="term" value="F:identical protein binding"/>
    <property type="evidence" value="ECO:0000353"/>
    <property type="project" value="IntAct"/>
</dbReference>
<dbReference type="GO" id="GO:0017046">
    <property type="term" value="F:peptide hormone binding"/>
    <property type="evidence" value="ECO:0007669"/>
    <property type="project" value="Ensembl"/>
</dbReference>
<dbReference type="GO" id="GO:0008154">
    <property type="term" value="P:actin polymerization or depolymerization"/>
    <property type="evidence" value="ECO:0000314"/>
    <property type="project" value="UniProtKB"/>
</dbReference>
<dbReference type="GO" id="GO:0008343">
    <property type="term" value="P:adult feeding behavior"/>
    <property type="evidence" value="ECO:0000250"/>
    <property type="project" value="HGNC-UCL"/>
</dbReference>
<dbReference type="GO" id="GO:0032869">
    <property type="term" value="P:cellular response to insulin stimulus"/>
    <property type="evidence" value="ECO:0007669"/>
    <property type="project" value="Ensembl"/>
</dbReference>
<dbReference type="GO" id="GO:1990314">
    <property type="term" value="P:cellular response to insulin-like growth factor stimulus"/>
    <property type="evidence" value="ECO:0007669"/>
    <property type="project" value="Ensembl"/>
</dbReference>
<dbReference type="GO" id="GO:0071222">
    <property type="term" value="P:cellular response to lipopolysaccharide"/>
    <property type="evidence" value="ECO:0007669"/>
    <property type="project" value="Ensembl"/>
</dbReference>
<dbReference type="GO" id="GO:0097067">
    <property type="term" value="P:cellular response to thyroid hormone stimulus"/>
    <property type="evidence" value="ECO:0007669"/>
    <property type="project" value="Ensembl"/>
</dbReference>
<dbReference type="GO" id="GO:0046697">
    <property type="term" value="P:decidualization"/>
    <property type="evidence" value="ECO:0000314"/>
    <property type="project" value="UniProtKB"/>
</dbReference>
<dbReference type="GO" id="GO:0007186">
    <property type="term" value="P:G protein-coupled receptor signaling pathway"/>
    <property type="evidence" value="ECO:0000314"/>
    <property type="project" value="HGNC-UCL"/>
</dbReference>
<dbReference type="GO" id="GO:0036321">
    <property type="term" value="P:ghrelin secretion"/>
    <property type="evidence" value="ECO:0007669"/>
    <property type="project" value="Ensembl"/>
</dbReference>
<dbReference type="GO" id="GO:0030252">
    <property type="term" value="P:growth hormone secretion"/>
    <property type="evidence" value="ECO:0000304"/>
    <property type="project" value="HGNC-UCL"/>
</dbReference>
<dbReference type="GO" id="GO:0009755">
    <property type="term" value="P:hormone-mediated signaling pathway"/>
    <property type="evidence" value="ECO:0000314"/>
    <property type="project" value="HGNC-UCL"/>
</dbReference>
<dbReference type="GO" id="GO:0048009">
    <property type="term" value="P:insulin-like growth factor receptor signaling pathway"/>
    <property type="evidence" value="ECO:0007669"/>
    <property type="project" value="Ensembl"/>
</dbReference>
<dbReference type="GO" id="GO:0007611">
    <property type="term" value="P:learning or memory"/>
    <property type="evidence" value="ECO:0007669"/>
    <property type="project" value="Ensembl"/>
</dbReference>
<dbReference type="GO" id="GO:0032099">
    <property type="term" value="P:negative regulation of appetite"/>
    <property type="evidence" value="ECO:0007669"/>
    <property type="project" value="Ensembl"/>
</dbReference>
<dbReference type="GO" id="GO:0050728">
    <property type="term" value="P:negative regulation of inflammatory response"/>
    <property type="evidence" value="ECO:0000314"/>
    <property type="project" value="UniProtKB"/>
</dbReference>
<dbReference type="GO" id="GO:0046676">
    <property type="term" value="P:negative regulation of insulin secretion"/>
    <property type="evidence" value="ECO:0007669"/>
    <property type="project" value="Ensembl"/>
</dbReference>
<dbReference type="GO" id="GO:0032691">
    <property type="term" value="P:negative regulation of interleukin-1 beta production"/>
    <property type="evidence" value="ECO:0000314"/>
    <property type="project" value="UniProtKB"/>
</dbReference>
<dbReference type="GO" id="GO:0032715">
    <property type="term" value="P:negative regulation of interleukin-6 production"/>
    <property type="evidence" value="ECO:0000314"/>
    <property type="project" value="UniProtKB"/>
</dbReference>
<dbReference type="GO" id="GO:0090327">
    <property type="term" value="P:negative regulation of locomotion involved in locomotory behavior"/>
    <property type="evidence" value="ECO:0007669"/>
    <property type="project" value="Ensembl"/>
</dbReference>
<dbReference type="GO" id="GO:2000110">
    <property type="term" value="P:negative regulation of macrophage apoptotic process"/>
    <property type="evidence" value="ECO:0007669"/>
    <property type="project" value="Ensembl"/>
</dbReference>
<dbReference type="GO" id="GO:0010700">
    <property type="term" value="P:negative regulation of norepinephrine secretion"/>
    <property type="evidence" value="ECO:0007669"/>
    <property type="project" value="Ensembl"/>
</dbReference>
<dbReference type="GO" id="GO:0032720">
    <property type="term" value="P:negative regulation of tumor necrosis factor production"/>
    <property type="evidence" value="ECO:0000314"/>
    <property type="project" value="UniProtKB"/>
</dbReference>
<dbReference type="GO" id="GO:0032100">
    <property type="term" value="P:positive regulation of appetite"/>
    <property type="evidence" value="ECO:0000250"/>
    <property type="project" value="HGNC-UCL"/>
</dbReference>
<dbReference type="GO" id="GO:1904000">
    <property type="term" value="P:positive regulation of eating behavior"/>
    <property type="evidence" value="ECO:0007669"/>
    <property type="project" value="Ensembl"/>
</dbReference>
<dbReference type="GO" id="GO:0045923">
    <property type="term" value="P:positive regulation of fatty acid metabolic process"/>
    <property type="evidence" value="ECO:0007669"/>
    <property type="project" value="Ensembl"/>
</dbReference>
<dbReference type="GO" id="GO:0043568">
    <property type="term" value="P:positive regulation of insulin-like growth factor receptor signaling pathway"/>
    <property type="evidence" value="ECO:0007669"/>
    <property type="project" value="Ensembl"/>
</dbReference>
<dbReference type="GO" id="GO:0040018">
    <property type="term" value="P:positive regulation of multicellular organism growth"/>
    <property type="evidence" value="ECO:0000315"/>
    <property type="project" value="HGNC-UCL"/>
</dbReference>
<dbReference type="GO" id="GO:0120058">
    <property type="term" value="P:positive regulation of small intestinal transit"/>
    <property type="evidence" value="ECO:0007669"/>
    <property type="project" value="Ensembl"/>
</dbReference>
<dbReference type="GO" id="GO:1904349">
    <property type="term" value="P:positive regulation of small intestine smooth muscle contraction"/>
    <property type="evidence" value="ECO:0007669"/>
    <property type="project" value="Ensembl"/>
</dbReference>
<dbReference type="GO" id="GO:1903672">
    <property type="term" value="P:positive regulation of sprouting angiogenesis"/>
    <property type="evidence" value="ECO:0007669"/>
    <property type="project" value="Ensembl"/>
</dbReference>
<dbReference type="GO" id="GO:1905564">
    <property type="term" value="P:positive regulation of vascular endothelial cell proliferation"/>
    <property type="evidence" value="ECO:0007669"/>
    <property type="project" value="Ensembl"/>
</dbReference>
<dbReference type="GO" id="GO:0099170">
    <property type="term" value="P:postsynaptic modulation of chemical synaptic transmission"/>
    <property type="evidence" value="ECO:0007669"/>
    <property type="project" value="Ensembl"/>
</dbReference>
<dbReference type="GO" id="GO:1905333">
    <property type="term" value="P:regulation of gastric motility"/>
    <property type="evidence" value="ECO:0007669"/>
    <property type="project" value="Ensembl"/>
</dbReference>
<dbReference type="GO" id="GO:0060123">
    <property type="term" value="P:regulation of growth hormone secretion"/>
    <property type="evidence" value="ECO:0007669"/>
    <property type="project" value="Ensembl"/>
</dbReference>
<dbReference type="GO" id="GO:0043134">
    <property type="term" value="P:regulation of hindgut contraction"/>
    <property type="evidence" value="ECO:0007669"/>
    <property type="project" value="Ensembl"/>
</dbReference>
<dbReference type="GO" id="GO:0098696">
    <property type="term" value="P:regulation of neurotransmitter receptor localization to postsynaptic specialization membrane"/>
    <property type="evidence" value="ECO:0007669"/>
    <property type="project" value="Ensembl"/>
</dbReference>
<dbReference type="GO" id="GO:0099175">
    <property type="term" value="P:regulation of postsynapse organization"/>
    <property type="evidence" value="ECO:0007669"/>
    <property type="project" value="Ensembl"/>
</dbReference>
<dbReference type="GO" id="GO:0051963">
    <property type="term" value="P:regulation of synapse assembly"/>
    <property type="evidence" value="ECO:0007669"/>
    <property type="project" value="Ensembl"/>
</dbReference>
<dbReference type="GO" id="GO:0051969">
    <property type="term" value="P:regulation of transmission of nerve impulse"/>
    <property type="evidence" value="ECO:0007669"/>
    <property type="project" value="Ensembl"/>
</dbReference>
<dbReference type="GO" id="GO:0071548">
    <property type="term" value="P:response to dexamethasone"/>
    <property type="evidence" value="ECO:0007669"/>
    <property type="project" value="Ensembl"/>
</dbReference>
<dbReference type="GO" id="GO:0032355">
    <property type="term" value="P:response to estradiol"/>
    <property type="evidence" value="ECO:0007669"/>
    <property type="project" value="Ensembl"/>
</dbReference>
<dbReference type="GO" id="GO:0032354">
    <property type="term" value="P:response to follicle-stimulating hormone"/>
    <property type="evidence" value="ECO:0007669"/>
    <property type="project" value="Ensembl"/>
</dbReference>
<dbReference type="GO" id="GO:0032094">
    <property type="term" value="P:response to food"/>
    <property type="evidence" value="ECO:0007669"/>
    <property type="project" value="Ensembl"/>
</dbReference>
<dbReference type="GO" id="GO:0060416">
    <property type="term" value="P:response to growth hormone"/>
    <property type="evidence" value="ECO:0007669"/>
    <property type="project" value="Ensembl"/>
</dbReference>
<dbReference type="GO" id="GO:0009725">
    <property type="term" value="P:response to hormone"/>
    <property type="evidence" value="ECO:0000314"/>
    <property type="project" value="UniProtKB"/>
</dbReference>
<dbReference type="GO" id="GO:1902065">
    <property type="term" value="P:response to L-glutamate"/>
    <property type="evidence" value="ECO:0007669"/>
    <property type="project" value="Ensembl"/>
</dbReference>
<dbReference type="GO" id="GO:0007283">
    <property type="term" value="P:spermatogenesis"/>
    <property type="evidence" value="ECO:0007669"/>
    <property type="project" value="Ensembl"/>
</dbReference>
<dbReference type="CDD" id="cd15131">
    <property type="entry name" value="7tmA_GHSR"/>
    <property type="match status" value="1"/>
</dbReference>
<dbReference type="FunFam" id="1.20.1070.10:FF:000125">
    <property type="entry name" value="growth hormone secretagogue receptor type 1"/>
    <property type="match status" value="1"/>
</dbReference>
<dbReference type="Gene3D" id="1.20.1070.10">
    <property type="entry name" value="Rhodopsin 7-helix transmembrane proteins"/>
    <property type="match status" value="1"/>
</dbReference>
<dbReference type="InterPro" id="IPR003905">
    <property type="entry name" value="GHS-R/MTLR"/>
</dbReference>
<dbReference type="InterPro" id="IPR000276">
    <property type="entry name" value="GPCR_Rhodpsn"/>
</dbReference>
<dbReference type="InterPro" id="IPR017452">
    <property type="entry name" value="GPCR_Rhodpsn_7TM"/>
</dbReference>
<dbReference type="PANTHER" id="PTHR24243">
    <property type="entry name" value="G-PROTEIN COUPLED RECEPTOR"/>
    <property type="match status" value="1"/>
</dbReference>
<dbReference type="PANTHER" id="PTHR24243:SF7">
    <property type="entry name" value="GROWTH HORMONE SECRETAGOGUE RECEPTOR TYPE 1"/>
    <property type="match status" value="1"/>
</dbReference>
<dbReference type="Pfam" id="PF00001">
    <property type="entry name" value="7tm_1"/>
    <property type="match status" value="1"/>
</dbReference>
<dbReference type="PRINTS" id="PR01417">
    <property type="entry name" value="GHSRECEPTOR"/>
</dbReference>
<dbReference type="PRINTS" id="PR00237">
    <property type="entry name" value="GPCRRHODOPSN"/>
</dbReference>
<dbReference type="SUPFAM" id="SSF81321">
    <property type="entry name" value="Family A G protein-coupled receptor-like"/>
    <property type="match status" value="1"/>
</dbReference>
<dbReference type="PROSITE" id="PS00237">
    <property type="entry name" value="G_PROTEIN_RECEP_F1_1"/>
    <property type="match status" value="1"/>
</dbReference>
<dbReference type="PROSITE" id="PS50262">
    <property type="entry name" value="G_PROTEIN_RECEP_F1_2"/>
    <property type="match status" value="1"/>
</dbReference>